<reference key="1">
    <citation type="journal article" date="2007" name="Genome Res.">
        <title>Genome sequence of a proteolytic (Group I) Clostridium botulinum strain Hall A and comparative analysis of the clostridial genomes.</title>
        <authorList>
            <person name="Sebaihia M."/>
            <person name="Peck M.W."/>
            <person name="Minton N.P."/>
            <person name="Thomson N.R."/>
            <person name="Holden M.T.G."/>
            <person name="Mitchell W.J."/>
            <person name="Carter A.T."/>
            <person name="Bentley S.D."/>
            <person name="Mason D.R."/>
            <person name="Crossman L."/>
            <person name="Paul C.J."/>
            <person name="Ivens A."/>
            <person name="Wells-Bennik M.H.J."/>
            <person name="Davis I.J."/>
            <person name="Cerdeno-Tarraga A.M."/>
            <person name="Churcher C."/>
            <person name="Quail M.A."/>
            <person name="Chillingworth T."/>
            <person name="Feltwell T."/>
            <person name="Fraser A."/>
            <person name="Goodhead I."/>
            <person name="Hance Z."/>
            <person name="Jagels K."/>
            <person name="Larke N."/>
            <person name="Maddison M."/>
            <person name="Moule S."/>
            <person name="Mungall K."/>
            <person name="Norbertczak H."/>
            <person name="Rabbinowitsch E."/>
            <person name="Sanders M."/>
            <person name="Simmonds M."/>
            <person name="White B."/>
            <person name="Whithead S."/>
            <person name="Parkhill J."/>
        </authorList>
    </citation>
    <scope>NUCLEOTIDE SEQUENCE [LARGE SCALE GENOMIC DNA]</scope>
    <source>
        <strain>Hall / ATCC 3502 / NCTC 13319 / Type A</strain>
    </source>
</reference>
<reference key="2">
    <citation type="journal article" date="2007" name="PLoS ONE">
        <title>Analysis of the neurotoxin complex genes in Clostridium botulinum A1-A4 and B1 strains: BoNT/A3, /Ba4 and /B1 clusters are located within plasmids.</title>
        <authorList>
            <person name="Smith T.J."/>
            <person name="Hill K.K."/>
            <person name="Foley B.T."/>
            <person name="Detter J.C."/>
            <person name="Munk A.C."/>
            <person name="Bruce D.C."/>
            <person name="Doggett N.A."/>
            <person name="Smith L.A."/>
            <person name="Marks J.D."/>
            <person name="Xie G."/>
            <person name="Brettin T.S."/>
        </authorList>
    </citation>
    <scope>NUCLEOTIDE SEQUENCE [LARGE SCALE GENOMIC DNA]</scope>
    <source>
        <strain>Hall / ATCC 3502 / NCTC 13319 / Type A</strain>
    </source>
</reference>
<proteinExistence type="inferred from homology"/>
<gene>
    <name evidence="1" type="primary">mnmA2</name>
    <name type="ordered locus">CBO2905</name>
    <name type="ordered locus">CLC_2801</name>
</gene>
<dbReference type="EC" id="2.8.1.13" evidence="1"/>
<dbReference type="EMBL" id="CP000727">
    <property type="protein sequence ID" value="ABS36572.1"/>
    <property type="molecule type" value="Genomic_DNA"/>
</dbReference>
<dbReference type="EMBL" id="AM412317">
    <property type="protein sequence ID" value="CAL84469.1"/>
    <property type="molecule type" value="Genomic_DNA"/>
</dbReference>
<dbReference type="RefSeq" id="YP_001255401.1">
    <property type="nucleotide sequence ID" value="NC_009495.1"/>
</dbReference>
<dbReference type="RefSeq" id="YP_001388636.1">
    <property type="nucleotide sequence ID" value="NC_009698.1"/>
</dbReference>
<dbReference type="SMR" id="A5I5Y9"/>
<dbReference type="GeneID" id="5187368"/>
<dbReference type="KEGG" id="cbh:CLC_2801"/>
<dbReference type="KEGG" id="cbo:CBO2905"/>
<dbReference type="PATRIC" id="fig|413999.7.peg.2886"/>
<dbReference type="HOGENOM" id="CLU_035188_0_0_9"/>
<dbReference type="PRO" id="PR:A5I5Y9"/>
<dbReference type="Proteomes" id="UP000001986">
    <property type="component" value="Chromosome"/>
</dbReference>
<dbReference type="GO" id="GO:0005737">
    <property type="term" value="C:cytoplasm"/>
    <property type="evidence" value="ECO:0007669"/>
    <property type="project" value="UniProtKB-SubCell"/>
</dbReference>
<dbReference type="GO" id="GO:0005524">
    <property type="term" value="F:ATP binding"/>
    <property type="evidence" value="ECO:0007669"/>
    <property type="project" value="UniProtKB-KW"/>
</dbReference>
<dbReference type="GO" id="GO:0000049">
    <property type="term" value="F:tRNA binding"/>
    <property type="evidence" value="ECO:0007669"/>
    <property type="project" value="UniProtKB-KW"/>
</dbReference>
<dbReference type="GO" id="GO:0103016">
    <property type="term" value="F:tRNA-uridine 2-sulfurtransferase activity"/>
    <property type="evidence" value="ECO:0007669"/>
    <property type="project" value="UniProtKB-EC"/>
</dbReference>
<dbReference type="GO" id="GO:0002143">
    <property type="term" value="P:tRNA wobble position uridine thiolation"/>
    <property type="evidence" value="ECO:0000318"/>
    <property type="project" value="GO_Central"/>
</dbReference>
<dbReference type="CDD" id="cd01998">
    <property type="entry name" value="MnmA_TRMU-like"/>
    <property type="match status" value="1"/>
</dbReference>
<dbReference type="FunFam" id="2.30.30.280:FF:000001">
    <property type="entry name" value="tRNA-specific 2-thiouridylase MnmA"/>
    <property type="match status" value="1"/>
</dbReference>
<dbReference type="FunFam" id="2.40.30.10:FF:000023">
    <property type="entry name" value="tRNA-specific 2-thiouridylase MnmA"/>
    <property type="match status" value="1"/>
</dbReference>
<dbReference type="FunFam" id="3.40.50.620:FF:000115">
    <property type="entry name" value="tRNA-specific 2-thiouridylase MnmA"/>
    <property type="match status" value="1"/>
</dbReference>
<dbReference type="Gene3D" id="2.30.30.280">
    <property type="entry name" value="Adenine nucleotide alpha hydrolases-like domains"/>
    <property type="match status" value="1"/>
</dbReference>
<dbReference type="Gene3D" id="3.40.50.620">
    <property type="entry name" value="HUPs"/>
    <property type="match status" value="1"/>
</dbReference>
<dbReference type="Gene3D" id="2.40.30.10">
    <property type="entry name" value="Translation factors"/>
    <property type="match status" value="1"/>
</dbReference>
<dbReference type="HAMAP" id="MF_00144">
    <property type="entry name" value="tRNA_thiouridyl_MnmA"/>
    <property type="match status" value="1"/>
</dbReference>
<dbReference type="InterPro" id="IPR004506">
    <property type="entry name" value="MnmA-like"/>
</dbReference>
<dbReference type="InterPro" id="IPR046885">
    <property type="entry name" value="MnmA-like_C"/>
</dbReference>
<dbReference type="InterPro" id="IPR046884">
    <property type="entry name" value="MnmA-like_central"/>
</dbReference>
<dbReference type="InterPro" id="IPR023382">
    <property type="entry name" value="MnmA-like_central_sf"/>
</dbReference>
<dbReference type="InterPro" id="IPR014729">
    <property type="entry name" value="Rossmann-like_a/b/a_fold"/>
</dbReference>
<dbReference type="NCBIfam" id="NF001138">
    <property type="entry name" value="PRK00143.1"/>
    <property type="match status" value="1"/>
</dbReference>
<dbReference type="NCBIfam" id="TIGR00420">
    <property type="entry name" value="trmU"/>
    <property type="match status" value="1"/>
</dbReference>
<dbReference type="PANTHER" id="PTHR11933:SF5">
    <property type="entry name" value="MITOCHONDRIAL TRNA-SPECIFIC 2-THIOURIDYLASE 1"/>
    <property type="match status" value="1"/>
</dbReference>
<dbReference type="PANTHER" id="PTHR11933">
    <property type="entry name" value="TRNA 5-METHYLAMINOMETHYL-2-THIOURIDYLATE -METHYLTRANSFERASE"/>
    <property type="match status" value="1"/>
</dbReference>
<dbReference type="Pfam" id="PF03054">
    <property type="entry name" value="tRNA_Me_trans"/>
    <property type="match status" value="1"/>
</dbReference>
<dbReference type="Pfam" id="PF20258">
    <property type="entry name" value="tRNA_Me_trans_C"/>
    <property type="match status" value="1"/>
</dbReference>
<dbReference type="Pfam" id="PF20259">
    <property type="entry name" value="tRNA_Me_trans_M"/>
    <property type="match status" value="1"/>
</dbReference>
<dbReference type="SUPFAM" id="SSF52402">
    <property type="entry name" value="Adenine nucleotide alpha hydrolases-like"/>
    <property type="match status" value="1"/>
</dbReference>
<evidence type="ECO:0000255" key="1">
    <source>
        <dbReference type="HAMAP-Rule" id="MF_00144"/>
    </source>
</evidence>
<keyword id="KW-0067">ATP-binding</keyword>
<keyword id="KW-0963">Cytoplasm</keyword>
<keyword id="KW-1015">Disulfide bond</keyword>
<keyword id="KW-0547">Nucleotide-binding</keyword>
<keyword id="KW-1185">Reference proteome</keyword>
<keyword id="KW-0694">RNA-binding</keyword>
<keyword id="KW-0808">Transferase</keyword>
<keyword id="KW-0819">tRNA processing</keyword>
<keyword id="KW-0820">tRNA-binding</keyword>
<name>MNMA2_CLOBH</name>
<comment type="function">
    <text evidence="1">Catalyzes the 2-thiolation of uridine at the wobble position (U34) of tRNA, leading to the formation of s(2)U34.</text>
</comment>
<comment type="catalytic activity">
    <reaction evidence="1">
        <text>S-sulfanyl-L-cysteinyl-[protein] + uridine(34) in tRNA + AH2 + ATP = 2-thiouridine(34) in tRNA + L-cysteinyl-[protein] + A + AMP + diphosphate + H(+)</text>
        <dbReference type="Rhea" id="RHEA:47032"/>
        <dbReference type="Rhea" id="RHEA-COMP:10131"/>
        <dbReference type="Rhea" id="RHEA-COMP:11726"/>
        <dbReference type="Rhea" id="RHEA-COMP:11727"/>
        <dbReference type="Rhea" id="RHEA-COMP:11728"/>
        <dbReference type="ChEBI" id="CHEBI:13193"/>
        <dbReference type="ChEBI" id="CHEBI:15378"/>
        <dbReference type="ChEBI" id="CHEBI:17499"/>
        <dbReference type="ChEBI" id="CHEBI:29950"/>
        <dbReference type="ChEBI" id="CHEBI:30616"/>
        <dbReference type="ChEBI" id="CHEBI:33019"/>
        <dbReference type="ChEBI" id="CHEBI:61963"/>
        <dbReference type="ChEBI" id="CHEBI:65315"/>
        <dbReference type="ChEBI" id="CHEBI:87170"/>
        <dbReference type="ChEBI" id="CHEBI:456215"/>
        <dbReference type="EC" id="2.8.1.13"/>
    </reaction>
</comment>
<comment type="subcellular location">
    <subcellularLocation>
        <location evidence="1">Cytoplasm</location>
    </subcellularLocation>
</comment>
<comment type="similarity">
    <text evidence="1">Belongs to the MnmA/TRMU family.</text>
</comment>
<feature type="chain" id="PRO_0000349589" description="tRNA-specific 2-thiouridylase MnmA 2">
    <location>
        <begin position="1"/>
        <end position="353"/>
    </location>
</feature>
<feature type="region of interest" description="Interaction with tRNA" evidence="1">
    <location>
        <begin position="144"/>
        <end position="146"/>
    </location>
</feature>
<feature type="region of interest" description="Interaction with tRNA" evidence="1">
    <location>
        <begin position="300"/>
        <end position="301"/>
    </location>
</feature>
<feature type="active site" description="Nucleophile" evidence="1">
    <location>
        <position position="98"/>
    </location>
</feature>
<feature type="active site" description="Cysteine persulfide intermediate" evidence="1">
    <location>
        <position position="194"/>
    </location>
</feature>
<feature type="binding site" evidence="1">
    <location>
        <begin position="9"/>
        <end position="16"/>
    </location>
    <ligand>
        <name>ATP</name>
        <dbReference type="ChEBI" id="CHEBI:30616"/>
    </ligand>
</feature>
<feature type="binding site" evidence="1">
    <location>
        <position position="35"/>
    </location>
    <ligand>
        <name>ATP</name>
        <dbReference type="ChEBI" id="CHEBI:30616"/>
    </ligand>
</feature>
<feature type="binding site" evidence="1">
    <location>
        <position position="122"/>
    </location>
    <ligand>
        <name>ATP</name>
        <dbReference type="ChEBI" id="CHEBI:30616"/>
    </ligand>
</feature>
<feature type="site" description="Interaction with tRNA" evidence="1">
    <location>
        <position position="123"/>
    </location>
</feature>
<feature type="site" description="Interaction with tRNA" evidence="1">
    <location>
        <position position="333"/>
    </location>
</feature>
<feature type="disulfide bond" description="Alternate" evidence="1">
    <location>
        <begin position="98"/>
        <end position="194"/>
    </location>
</feature>
<sequence>MSKGIVALAMSGGVDSSVSAYILKERGYDVIGIYMDLWRDERKGYCNKSAAEDARRVAEKLDIPFHVINIEKKFKDNVIDYFIDEYLSGRTPNPCVACNKTIKFEAFFNAAKEFGADFMATGHYCKIEERNGRKVIVKAEDDKKDQTYMMYNLKQYQLERTIMPCGEYKKDHIREIAENIGLDVYNKKDSQEICFIPDNDHGGFIKRNYKSKIKQGNFVDKAGKIIGKHKGIIYYTIGQRKGLGIALGKPAYVIDINPITNEVVIGDEEDIFRTELIAKDVNFIPFDKLEKSMELEAKVRYSAKPSKATIIPLENNKVKVVFQNKQRAITKGQSVVFYDKDMLVGGGIIEEIV</sequence>
<organism>
    <name type="scientific">Clostridium botulinum (strain Hall / ATCC 3502 / NCTC 13319 / Type A)</name>
    <dbReference type="NCBI Taxonomy" id="441771"/>
    <lineage>
        <taxon>Bacteria</taxon>
        <taxon>Bacillati</taxon>
        <taxon>Bacillota</taxon>
        <taxon>Clostridia</taxon>
        <taxon>Eubacteriales</taxon>
        <taxon>Clostridiaceae</taxon>
        <taxon>Clostridium</taxon>
    </lineage>
</organism>
<protein>
    <recommendedName>
        <fullName evidence="1">tRNA-specific 2-thiouridylase MnmA 2</fullName>
        <ecNumber evidence="1">2.8.1.13</ecNumber>
    </recommendedName>
</protein>
<accession>A5I5Y9</accession>
<accession>A7G771</accession>